<proteinExistence type="evidence at transcript level"/>
<sequence>MEPGLKLSLGAMSTLFPSLFPRVTETLWFNLDRPCVEETELQQQEQQHQAWLQSIAEKDNNLVPIGKPASEHYDDEEEEDDEDDEDSEEDSEDDEDMQDMDEMNDYNESPDDGEVNEVDMEGNEQDQDQWMI</sequence>
<accession>P60007</accession>
<accession>Q3UT90</accession>
<accession>Q3UXV5</accession>
<accession>Q9CXK2</accession>
<accession>Q9Y269</accession>
<evidence type="ECO:0000250" key="1">
    <source>
        <dbReference type="UniProtKB" id="P60006"/>
    </source>
</evidence>
<evidence type="ECO:0000256" key="2">
    <source>
        <dbReference type="SAM" id="MobiDB-lite"/>
    </source>
</evidence>
<evidence type="ECO:0000303" key="3">
    <source>
    </source>
</evidence>
<evidence type="ECO:0000305" key="4"/>
<organism>
    <name type="scientific">Mus musculus</name>
    <name type="common">Mouse</name>
    <dbReference type="NCBI Taxonomy" id="10090"/>
    <lineage>
        <taxon>Eukaryota</taxon>
        <taxon>Metazoa</taxon>
        <taxon>Chordata</taxon>
        <taxon>Craniata</taxon>
        <taxon>Vertebrata</taxon>
        <taxon>Euteleostomi</taxon>
        <taxon>Mammalia</taxon>
        <taxon>Eutheria</taxon>
        <taxon>Euarchontoglires</taxon>
        <taxon>Glires</taxon>
        <taxon>Rodentia</taxon>
        <taxon>Myomorpha</taxon>
        <taxon>Muroidea</taxon>
        <taxon>Muridae</taxon>
        <taxon>Murinae</taxon>
        <taxon>Mus</taxon>
        <taxon>Mus</taxon>
    </lineage>
</organism>
<comment type="function">
    <text evidence="1">Component of the anaphase promoting complex/cyclosome (APC/C), a cell cycle-regulated E3 ubiquitin ligase that controls progression through mitosis and the G1 phase of the cell cycle. The APC/C complex catalyzes assembly of branched 'Lys-11'-/'Lys-48'-linked branched ubiquitin chains on target proteins. In the complex, plays a role in the release of the mitotic checkpoint complex (MCC) from the APC/C: not required for APC/C activity itself, but promotes the turnover of CDC20 and MCC on the APC/C, thereby participating in the responsiveness of the spindle assembly checkpoint. Also required for degradation of CDC20.</text>
</comment>
<comment type="pathway">
    <text evidence="1">Protein modification; protein ubiquitination.</text>
</comment>
<comment type="subunit">
    <text evidence="1">The mammalian APC/C is composed at least of 14 distinct subunits ANAPC1, ANAPC2, CDC27/APC3, ANAPC4, ANAPC5, CDC16/APC6, ANAPC7, CDC23/APC8, ANAPC10, ANAPC11, CDC26/APC12, ANAPC13, ANAPC15 and ANAPC16 that assemble into a complex of at least 19 chains with a combined molecular mass of around 1.2 MDa; APC/C interacts with FZR1 and FBXO5.</text>
</comment>
<comment type="alternative products">
    <event type="alternative splicing"/>
    <isoform>
        <id>P60007-1</id>
        <name>1</name>
        <sequence type="displayed"/>
    </isoform>
    <isoform>
        <id>P60007-2</id>
        <name>2</name>
        <sequence type="described" ref="VSP_043771"/>
    </isoform>
</comment>
<comment type="similarity">
    <text evidence="4">Belongs to the APC15 family.</text>
</comment>
<comment type="caution">
    <text evidence="4">It is uncertain whether Met-1 or Met-12 is the initiator.</text>
</comment>
<name>APC15_MOUSE</name>
<reference key="1">
    <citation type="journal article" date="2005" name="Science">
        <title>The transcriptional landscape of the mammalian genome.</title>
        <authorList>
            <person name="Carninci P."/>
            <person name="Kasukawa T."/>
            <person name="Katayama S."/>
            <person name="Gough J."/>
            <person name="Frith M.C."/>
            <person name="Maeda N."/>
            <person name="Oyama R."/>
            <person name="Ravasi T."/>
            <person name="Lenhard B."/>
            <person name="Wells C."/>
            <person name="Kodzius R."/>
            <person name="Shimokawa K."/>
            <person name="Bajic V.B."/>
            <person name="Brenner S.E."/>
            <person name="Batalov S."/>
            <person name="Forrest A.R."/>
            <person name="Zavolan M."/>
            <person name="Davis M.J."/>
            <person name="Wilming L.G."/>
            <person name="Aidinis V."/>
            <person name="Allen J.E."/>
            <person name="Ambesi-Impiombato A."/>
            <person name="Apweiler R."/>
            <person name="Aturaliya R.N."/>
            <person name="Bailey T.L."/>
            <person name="Bansal M."/>
            <person name="Baxter L."/>
            <person name="Beisel K.W."/>
            <person name="Bersano T."/>
            <person name="Bono H."/>
            <person name="Chalk A.M."/>
            <person name="Chiu K.P."/>
            <person name="Choudhary V."/>
            <person name="Christoffels A."/>
            <person name="Clutterbuck D.R."/>
            <person name="Crowe M.L."/>
            <person name="Dalla E."/>
            <person name="Dalrymple B.P."/>
            <person name="de Bono B."/>
            <person name="Della Gatta G."/>
            <person name="di Bernardo D."/>
            <person name="Down T."/>
            <person name="Engstrom P."/>
            <person name="Fagiolini M."/>
            <person name="Faulkner G."/>
            <person name="Fletcher C.F."/>
            <person name="Fukushima T."/>
            <person name="Furuno M."/>
            <person name="Futaki S."/>
            <person name="Gariboldi M."/>
            <person name="Georgii-Hemming P."/>
            <person name="Gingeras T.R."/>
            <person name="Gojobori T."/>
            <person name="Green R.E."/>
            <person name="Gustincich S."/>
            <person name="Harbers M."/>
            <person name="Hayashi Y."/>
            <person name="Hensch T.K."/>
            <person name="Hirokawa N."/>
            <person name="Hill D."/>
            <person name="Huminiecki L."/>
            <person name="Iacono M."/>
            <person name="Ikeo K."/>
            <person name="Iwama A."/>
            <person name="Ishikawa T."/>
            <person name="Jakt M."/>
            <person name="Kanapin A."/>
            <person name="Katoh M."/>
            <person name="Kawasawa Y."/>
            <person name="Kelso J."/>
            <person name="Kitamura H."/>
            <person name="Kitano H."/>
            <person name="Kollias G."/>
            <person name="Krishnan S.P."/>
            <person name="Kruger A."/>
            <person name="Kummerfeld S.K."/>
            <person name="Kurochkin I.V."/>
            <person name="Lareau L.F."/>
            <person name="Lazarevic D."/>
            <person name="Lipovich L."/>
            <person name="Liu J."/>
            <person name="Liuni S."/>
            <person name="McWilliam S."/>
            <person name="Madan Babu M."/>
            <person name="Madera M."/>
            <person name="Marchionni L."/>
            <person name="Matsuda H."/>
            <person name="Matsuzawa S."/>
            <person name="Miki H."/>
            <person name="Mignone F."/>
            <person name="Miyake S."/>
            <person name="Morris K."/>
            <person name="Mottagui-Tabar S."/>
            <person name="Mulder N."/>
            <person name="Nakano N."/>
            <person name="Nakauchi H."/>
            <person name="Ng P."/>
            <person name="Nilsson R."/>
            <person name="Nishiguchi S."/>
            <person name="Nishikawa S."/>
            <person name="Nori F."/>
            <person name="Ohara O."/>
            <person name="Okazaki Y."/>
            <person name="Orlando V."/>
            <person name="Pang K.C."/>
            <person name="Pavan W.J."/>
            <person name="Pavesi G."/>
            <person name="Pesole G."/>
            <person name="Petrovsky N."/>
            <person name="Piazza S."/>
            <person name="Reed J."/>
            <person name="Reid J.F."/>
            <person name="Ring B.Z."/>
            <person name="Ringwald M."/>
            <person name="Rost B."/>
            <person name="Ruan Y."/>
            <person name="Salzberg S.L."/>
            <person name="Sandelin A."/>
            <person name="Schneider C."/>
            <person name="Schoenbach C."/>
            <person name="Sekiguchi K."/>
            <person name="Semple C.A."/>
            <person name="Seno S."/>
            <person name="Sessa L."/>
            <person name="Sheng Y."/>
            <person name="Shibata Y."/>
            <person name="Shimada H."/>
            <person name="Shimada K."/>
            <person name="Silva D."/>
            <person name="Sinclair B."/>
            <person name="Sperling S."/>
            <person name="Stupka E."/>
            <person name="Sugiura K."/>
            <person name="Sultana R."/>
            <person name="Takenaka Y."/>
            <person name="Taki K."/>
            <person name="Tammoja K."/>
            <person name="Tan S.L."/>
            <person name="Tang S."/>
            <person name="Taylor M.S."/>
            <person name="Tegner J."/>
            <person name="Teichmann S.A."/>
            <person name="Ueda H.R."/>
            <person name="van Nimwegen E."/>
            <person name="Verardo R."/>
            <person name="Wei C.L."/>
            <person name="Yagi K."/>
            <person name="Yamanishi H."/>
            <person name="Zabarovsky E."/>
            <person name="Zhu S."/>
            <person name="Zimmer A."/>
            <person name="Hide W."/>
            <person name="Bult C."/>
            <person name="Grimmond S.M."/>
            <person name="Teasdale R.D."/>
            <person name="Liu E.T."/>
            <person name="Brusic V."/>
            <person name="Quackenbush J."/>
            <person name="Wahlestedt C."/>
            <person name="Mattick J.S."/>
            <person name="Hume D.A."/>
            <person name="Kai C."/>
            <person name="Sasaki D."/>
            <person name="Tomaru Y."/>
            <person name="Fukuda S."/>
            <person name="Kanamori-Katayama M."/>
            <person name="Suzuki M."/>
            <person name="Aoki J."/>
            <person name="Arakawa T."/>
            <person name="Iida J."/>
            <person name="Imamura K."/>
            <person name="Itoh M."/>
            <person name="Kato T."/>
            <person name="Kawaji H."/>
            <person name="Kawagashira N."/>
            <person name="Kawashima T."/>
            <person name="Kojima M."/>
            <person name="Kondo S."/>
            <person name="Konno H."/>
            <person name="Nakano K."/>
            <person name="Ninomiya N."/>
            <person name="Nishio T."/>
            <person name="Okada M."/>
            <person name="Plessy C."/>
            <person name="Shibata K."/>
            <person name="Shiraki T."/>
            <person name="Suzuki S."/>
            <person name="Tagami M."/>
            <person name="Waki K."/>
            <person name="Watahiki A."/>
            <person name="Okamura-Oho Y."/>
            <person name="Suzuki H."/>
            <person name="Kawai J."/>
            <person name="Hayashizaki Y."/>
        </authorList>
    </citation>
    <scope>NUCLEOTIDE SEQUENCE [LARGE SCALE MRNA] (ISOFORMS 1 AND 2)</scope>
    <source>
        <strain>C57BL/6J</strain>
        <tissue>Egg</tissue>
        <tissue>Embryonic head</tissue>
        <tissue>Wolffian duct</tissue>
    </source>
</reference>
<reference key="2">
    <citation type="journal article" date="2009" name="PLoS Biol.">
        <title>Lineage-specific biology revealed by a finished genome assembly of the mouse.</title>
        <authorList>
            <person name="Church D.M."/>
            <person name="Goodstadt L."/>
            <person name="Hillier L.W."/>
            <person name="Zody M.C."/>
            <person name="Goldstein S."/>
            <person name="She X."/>
            <person name="Bult C.J."/>
            <person name="Agarwala R."/>
            <person name="Cherry J.L."/>
            <person name="DiCuccio M."/>
            <person name="Hlavina W."/>
            <person name="Kapustin Y."/>
            <person name="Meric P."/>
            <person name="Maglott D."/>
            <person name="Birtle Z."/>
            <person name="Marques A.C."/>
            <person name="Graves T."/>
            <person name="Zhou S."/>
            <person name="Teague B."/>
            <person name="Potamousis K."/>
            <person name="Churas C."/>
            <person name="Place M."/>
            <person name="Herschleb J."/>
            <person name="Runnheim R."/>
            <person name="Forrest D."/>
            <person name="Amos-Landgraf J."/>
            <person name="Schwartz D.C."/>
            <person name="Cheng Z."/>
            <person name="Lindblad-Toh K."/>
            <person name="Eichler E.E."/>
            <person name="Ponting C.P."/>
        </authorList>
    </citation>
    <scope>NUCLEOTIDE SEQUENCE [LARGE SCALE GENOMIC DNA]</scope>
    <source>
        <strain>C57BL/6J</strain>
    </source>
</reference>
<reference key="3">
    <citation type="journal article" date="2004" name="Genome Res.">
        <title>The status, quality, and expansion of the NIH full-length cDNA project: the Mammalian Gene Collection (MGC).</title>
        <authorList>
            <consortium name="The MGC Project Team"/>
        </authorList>
    </citation>
    <scope>NUCLEOTIDE SEQUENCE [LARGE SCALE MRNA] (ISOFORM 1)</scope>
    <source>
        <strain>FVB/N</strain>
        <tissue>Mammary tumor</tissue>
    </source>
</reference>
<dbReference type="EMBL" id="AK014309">
    <property type="protein sequence ID" value="BAB29261.2"/>
    <property type="molecule type" value="mRNA"/>
</dbReference>
<dbReference type="EMBL" id="AK135201">
    <property type="protein sequence ID" value="BAE22458.1"/>
    <property type="molecule type" value="mRNA"/>
</dbReference>
<dbReference type="EMBL" id="AK139635">
    <property type="protein sequence ID" value="BAE24090.1"/>
    <property type="molecule type" value="mRNA"/>
</dbReference>
<dbReference type="EMBL" id="AC167240">
    <property type="status" value="NOT_ANNOTATED_CDS"/>
    <property type="molecule type" value="Genomic_DNA"/>
</dbReference>
<dbReference type="EMBL" id="BC006736">
    <property type="protein sequence ID" value="AAH06736.2"/>
    <property type="molecule type" value="mRNA"/>
</dbReference>
<dbReference type="CCDS" id="CCDS21518.1">
    <molecule id="P60007-1"/>
</dbReference>
<dbReference type="CCDS" id="CCDS80760.1">
    <molecule id="P60007-2"/>
</dbReference>
<dbReference type="RefSeq" id="NP_001278277.1">
    <molecule id="P60007-2"/>
    <property type="nucleotide sequence ID" value="NM_001291348.1"/>
</dbReference>
<dbReference type="RefSeq" id="NP_001278278.1">
    <property type="nucleotide sequence ID" value="NM_001291349.1"/>
</dbReference>
<dbReference type="RefSeq" id="NP_001278281.1">
    <molecule id="P60007-1"/>
    <property type="nucleotide sequence ID" value="NM_001291352.1"/>
</dbReference>
<dbReference type="RefSeq" id="NP_001278282.1">
    <molecule id="P60007-1"/>
    <property type="nucleotide sequence ID" value="NM_001291353.1"/>
</dbReference>
<dbReference type="RefSeq" id="NP_081808.2">
    <molecule id="P60007-1"/>
    <property type="nucleotide sequence ID" value="NM_027532.4"/>
</dbReference>
<dbReference type="RefSeq" id="XP_017167848.1">
    <property type="nucleotide sequence ID" value="XM_017312359.1"/>
</dbReference>
<dbReference type="RefSeq" id="XP_030098909.1">
    <molecule id="P60007-1"/>
    <property type="nucleotide sequence ID" value="XM_030243049.2"/>
</dbReference>
<dbReference type="RefSeq" id="XP_030098910.1">
    <molecule id="P60007-1"/>
    <property type="nucleotide sequence ID" value="XM_030243050.2"/>
</dbReference>
<dbReference type="RefSeq" id="XP_030098911.1">
    <molecule id="P60007-1"/>
    <property type="nucleotide sequence ID" value="XM_030243051.2"/>
</dbReference>
<dbReference type="RefSeq" id="XP_030098912.1">
    <molecule id="P60007-1"/>
    <property type="nucleotide sequence ID" value="XM_030243052.2"/>
</dbReference>
<dbReference type="RefSeq" id="XP_036009402.1">
    <molecule id="P60007-1"/>
    <property type="nucleotide sequence ID" value="XM_036153509.1"/>
</dbReference>
<dbReference type="RefSeq" id="XP_036009403.1">
    <molecule id="P60007-1"/>
    <property type="nucleotide sequence ID" value="XM_036153510.1"/>
</dbReference>
<dbReference type="SMR" id="P60007"/>
<dbReference type="FunCoup" id="P60007">
    <property type="interactions" value="800"/>
</dbReference>
<dbReference type="STRING" id="10090.ENSMUSP00000040286"/>
<dbReference type="PaxDb" id="10090-ENSMUSP00000096931"/>
<dbReference type="ProteomicsDB" id="296266">
    <molecule id="P60007-1"/>
</dbReference>
<dbReference type="ProteomicsDB" id="296267">
    <molecule id="P60007-2"/>
</dbReference>
<dbReference type="Pumba" id="P60007"/>
<dbReference type="Antibodypedia" id="44861">
    <property type="antibodies" value="39 antibodies from 17 providers"/>
</dbReference>
<dbReference type="DNASU" id="75430"/>
<dbReference type="Ensembl" id="ENSMUST00000106978.8">
    <molecule id="P60007-1"/>
    <property type="protein sequence ID" value="ENSMUSP00000102591.2"/>
    <property type="gene ID" value="ENSMUSG00000030649.19"/>
</dbReference>
<dbReference type="Ensembl" id="ENSMUST00000144207.9">
    <molecule id="P60007-1"/>
    <property type="protein sequence ID" value="ENSMUSP00000114771.2"/>
    <property type="gene ID" value="ENSMUSG00000030649.19"/>
</dbReference>
<dbReference type="Ensembl" id="ENSMUST00000178851.2">
    <molecule id="P60007-1"/>
    <property type="protein sequence ID" value="ENSMUSP00000136164.2"/>
    <property type="gene ID" value="ENSMUSG00000030649.19"/>
</dbReference>
<dbReference type="GeneID" id="75430"/>
<dbReference type="KEGG" id="mmu:75430"/>
<dbReference type="UCSC" id="uc009ipp.2">
    <molecule id="P60007-1"/>
    <property type="organism name" value="mouse"/>
</dbReference>
<dbReference type="UCSC" id="uc009ips.2">
    <molecule id="P60007-2"/>
    <property type="organism name" value="mouse"/>
</dbReference>
<dbReference type="AGR" id="MGI:1922680"/>
<dbReference type="CTD" id="25906"/>
<dbReference type="MGI" id="MGI:1922680">
    <property type="gene designation" value="Anapc15"/>
</dbReference>
<dbReference type="VEuPathDB" id="HostDB:ENSMUSG00000030649"/>
<dbReference type="eggNOG" id="ENOG502RZUK">
    <property type="taxonomic scope" value="Eukaryota"/>
</dbReference>
<dbReference type="GeneTree" id="ENSGT00390000000938"/>
<dbReference type="InParanoid" id="P60007"/>
<dbReference type="OrthoDB" id="6362917at2759"/>
<dbReference type="Reactome" id="R-MMU-141430">
    <property type="pathway name" value="Inactivation of APC/C via direct inhibition of the APC/C complex"/>
</dbReference>
<dbReference type="Reactome" id="R-MMU-174048">
    <property type="pathway name" value="APC/C:Cdc20 mediated degradation of Cyclin B"/>
</dbReference>
<dbReference type="Reactome" id="R-MMU-174084">
    <property type="pathway name" value="Autodegradation of Cdh1 by Cdh1:APC/C"/>
</dbReference>
<dbReference type="Reactome" id="R-MMU-174154">
    <property type="pathway name" value="APC/C:Cdc20 mediated degradation of Securin"/>
</dbReference>
<dbReference type="Reactome" id="R-MMU-174178">
    <property type="pathway name" value="APC/C:Cdh1 mediated degradation of Cdc20 and other APC/C:Cdh1 targeted proteins in late mitosis/early G1"/>
</dbReference>
<dbReference type="Reactome" id="R-MMU-174184">
    <property type="pathway name" value="Cdc20:Phospho-APC/C mediated degradation of Cyclin A"/>
</dbReference>
<dbReference type="Reactome" id="R-MMU-176407">
    <property type="pathway name" value="Conversion from APC/C:Cdc20 to APC/C:Cdh1 in late anaphase"/>
</dbReference>
<dbReference type="Reactome" id="R-MMU-176408">
    <property type="pathway name" value="Regulation of APC/C activators between G1/S and early anaphase"/>
</dbReference>
<dbReference type="Reactome" id="R-MMU-176409">
    <property type="pathway name" value="APC/C:Cdc20 mediated degradation of mitotic proteins"/>
</dbReference>
<dbReference type="Reactome" id="R-MMU-176412">
    <property type="pathway name" value="Phosphorylation of the APC/C"/>
</dbReference>
<dbReference type="Reactome" id="R-MMU-179409">
    <property type="pathway name" value="APC-Cdc20 mediated degradation of Nek2A"/>
</dbReference>
<dbReference type="Reactome" id="R-MMU-2467813">
    <property type="pathway name" value="Separation of Sister Chromatids"/>
</dbReference>
<dbReference type="Reactome" id="R-MMU-2559582">
    <property type="pathway name" value="Senescence-Associated Secretory Phenotype (SASP)"/>
</dbReference>
<dbReference type="Reactome" id="R-MMU-68867">
    <property type="pathway name" value="Assembly of the pre-replicative complex"/>
</dbReference>
<dbReference type="Reactome" id="R-MMU-69017">
    <property type="pathway name" value="CDK-mediated phosphorylation and removal of Cdc6"/>
</dbReference>
<dbReference type="UniPathway" id="UPA00143"/>
<dbReference type="BioGRID-ORCS" id="75430">
    <property type="hits" value="15 hits in 60 CRISPR screens"/>
</dbReference>
<dbReference type="ChiTaRS" id="Anapc15">
    <property type="organism name" value="mouse"/>
</dbReference>
<dbReference type="PRO" id="PR:P60007"/>
<dbReference type="Proteomes" id="UP000000589">
    <property type="component" value="Chromosome 7"/>
</dbReference>
<dbReference type="RNAct" id="P60007">
    <property type="molecule type" value="protein"/>
</dbReference>
<dbReference type="Bgee" id="ENSMUSG00000030649">
    <property type="expression patterns" value="Expressed in blastoderm cell in morula and 255 other cell types or tissues"/>
</dbReference>
<dbReference type="ExpressionAtlas" id="P60007">
    <property type="expression patterns" value="baseline and differential"/>
</dbReference>
<dbReference type="GO" id="GO:0005680">
    <property type="term" value="C:anaphase-promoting complex"/>
    <property type="evidence" value="ECO:0000250"/>
    <property type="project" value="UniProtKB"/>
</dbReference>
<dbReference type="GO" id="GO:0031145">
    <property type="term" value="P:anaphase-promoting complex-dependent catabolic process"/>
    <property type="evidence" value="ECO:0000250"/>
    <property type="project" value="UniProtKB"/>
</dbReference>
<dbReference type="GO" id="GO:0051301">
    <property type="term" value="P:cell division"/>
    <property type="evidence" value="ECO:0007669"/>
    <property type="project" value="UniProtKB-KW"/>
</dbReference>
<dbReference type="GO" id="GO:0141198">
    <property type="term" value="P:protein branched polyubiquitination"/>
    <property type="evidence" value="ECO:0000250"/>
    <property type="project" value="UniProtKB"/>
</dbReference>
<dbReference type="GO" id="GO:0070979">
    <property type="term" value="P:protein K11-linked ubiquitination"/>
    <property type="evidence" value="ECO:0000250"/>
    <property type="project" value="UniProtKB"/>
</dbReference>
<dbReference type="GO" id="GO:0070936">
    <property type="term" value="P:protein K48-linked ubiquitination"/>
    <property type="evidence" value="ECO:0000250"/>
    <property type="project" value="UniProtKB"/>
</dbReference>
<dbReference type="GO" id="GO:0090266">
    <property type="term" value="P:regulation of mitotic cell cycle spindle assembly checkpoint"/>
    <property type="evidence" value="ECO:0000250"/>
    <property type="project" value="UniProtKB"/>
</dbReference>
<dbReference type="InterPro" id="IPR026182">
    <property type="entry name" value="ANAPC15"/>
</dbReference>
<dbReference type="PANTHER" id="PTHR22526">
    <property type="entry name" value="ANAPHASE PROMOTING COMPLEX C SUBUNIT 15, PSEUDOGENE-RELATED"/>
    <property type="match status" value="1"/>
</dbReference>
<dbReference type="PANTHER" id="PTHR22526:SF2">
    <property type="entry name" value="ANAPHASE PROMOTING COMPLEX C SUBUNIT 15, PSEUDOGENE-RELATED"/>
    <property type="match status" value="1"/>
</dbReference>
<dbReference type="Pfam" id="PF15243">
    <property type="entry name" value="ANAPC15"/>
    <property type="match status" value="1"/>
</dbReference>
<gene>
    <name type="primary">Anapc15</name>
</gene>
<protein>
    <recommendedName>
        <fullName>Anaphase-promoting complex subunit 15</fullName>
        <shortName>APC15</shortName>
    </recommendedName>
</protein>
<feature type="chain" id="PRO_0000084073" description="Anaphase-promoting complex subunit 15">
    <location>
        <begin position="1"/>
        <end position="132"/>
    </location>
</feature>
<feature type="region of interest" description="Disordered" evidence="2">
    <location>
        <begin position="58"/>
        <end position="132"/>
    </location>
</feature>
<feature type="compositionally biased region" description="Acidic residues" evidence="2">
    <location>
        <begin position="73"/>
        <end position="132"/>
    </location>
</feature>
<feature type="splice variant" id="VSP_043771" description="In isoform 2." evidence="3">
    <original>MEPGLKLSLG</original>
    <variation>MRKLRPREVKCIGQNQRAR</variation>
    <location>
        <begin position="1"/>
        <end position="10"/>
    </location>
</feature>
<keyword id="KW-0025">Alternative splicing</keyword>
<keyword id="KW-0131">Cell cycle</keyword>
<keyword id="KW-0132">Cell division</keyword>
<keyword id="KW-0498">Mitosis</keyword>
<keyword id="KW-1185">Reference proteome</keyword>